<organism>
    <name type="scientific">Salmonella paratyphi A (strain AKU_12601)</name>
    <dbReference type="NCBI Taxonomy" id="554290"/>
    <lineage>
        <taxon>Bacteria</taxon>
        <taxon>Pseudomonadati</taxon>
        <taxon>Pseudomonadota</taxon>
        <taxon>Gammaproteobacteria</taxon>
        <taxon>Enterobacterales</taxon>
        <taxon>Enterobacteriaceae</taxon>
        <taxon>Salmonella</taxon>
    </lineage>
</organism>
<accession>B5BGX5</accession>
<dbReference type="EMBL" id="FM200053">
    <property type="protein sequence ID" value="CAR61325.1"/>
    <property type="molecule type" value="Genomic_DNA"/>
</dbReference>
<dbReference type="RefSeq" id="WP_000729187.1">
    <property type="nucleotide sequence ID" value="NC_011147.1"/>
</dbReference>
<dbReference type="SMR" id="B5BGX5"/>
<dbReference type="KEGG" id="sek:SSPA3074"/>
<dbReference type="HOGENOM" id="CLU_093315_2_2_6"/>
<dbReference type="Proteomes" id="UP000001869">
    <property type="component" value="Chromosome"/>
</dbReference>
<dbReference type="GO" id="GO:0005829">
    <property type="term" value="C:cytosol"/>
    <property type="evidence" value="ECO:0007669"/>
    <property type="project" value="UniProtKB-ARBA"/>
</dbReference>
<dbReference type="GO" id="GO:1990904">
    <property type="term" value="C:ribonucleoprotein complex"/>
    <property type="evidence" value="ECO:0007669"/>
    <property type="project" value="UniProtKB-KW"/>
</dbReference>
<dbReference type="GO" id="GO:0005840">
    <property type="term" value="C:ribosome"/>
    <property type="evidence" value="ECO:0007669"/>
    <property type="project" value="UniProtKB-KW"/>
</dbReference>
<dbReference type="GO" id="GO:0019843">
    <property type="term" value="F:rRNA binding"/>
    <property type="evidence" value="ECO:0007669"/>
    <property type="project" value="UniProtKB-UniRule"/>
</dbReference>
<dbReference type="GO" id="GO:0003735">
    <property type="term" value="F:structural constituent of ribosome"/>
    <property type="evidence" value="ECO:0007669"/>
    <property type="project" value="InterPro"/>
</dbReference>
<dbReference type="GO" id="GO:0006412">
    <property type="term" value="P:translation"/>
    <property type="evidence" value="ECO:0007669"/>
    <property type="project" value="UniProtKB-UniRule"/>
</dbReference>
<dbReference type="CDD" id="cd06089">
    <property type="entry name" value="KOW_RPL26"/>
    <property type="match status" value="1"/>
</dbReference>
<dbReference type="FunFam" id="2.30.30.30:FF:000004">
    <property type="entry name" value="50S ribosomal protein L24"/>
    <property type="match status" value="1"/>
</dbReference>
<dbReference type="Gene3D" id="2.30.30.30">
    <property type="match status" value="1"/>
</dbReference>
<dbReference type="HAMAP" id="MF_01326_B">
    <property type="entry name" value="Ribosomal_uL24_B"/>
    <property type="match status" value="1"/>
</dbReference>
<dbReference type="InterPro" id="IPR005824">
    <property type="entry name" value="KOW"/>
</dbReference>
<dbReference type="InterPro" id="IPR014722">
    <property type="entry name" value="Rib_uL2_dom2"/>
</dbReference>
<dbReference type="InterPro" id="IPR003256">
    <property type="entry name" value="Ribosomal_uL24"/>
</dbReference>
<dbReference type="InterPro" id="IPR005825">
    <property type="entry name" value="Ribosomal_uL24_CS"/>
</dbReference>
<dbReference type="InterPro" id="IPR041988">
    <property type="entry name" value="Ribosomal_uL24_KOW"/>
</dbReference>
<dbReference type="InterPro" id="IPR008991">
    <property type="entry name" value="Translation_prot_SH3-like_sf"/>
</dbReference>
<dbReference type="NCBIfam" id="TIGR01079">
    <property type="entry name" value="rplX_bact"/>
    <property type="match status" value="1"/>
</dbReference>
<dbReference type="PANTHER" id="PTHR12903">
    <property type="entry name" value="MITOCHONDRIAL RIBOSOMAL PROTEIN L24"/>
    <property type="match status" value="1"/>
</dbReference>
<dbReference type="Pfam" id="PF00467">
    <property type="entry name" value="KOW"/>
    <property type="match status" value="1"/>
</dbReference>
<dbReference type="Pfam" id="PF17136">
    <property type="entry name" value="ribosomal_L24"/>
    <property type="match status" value="1"/>
</dbReference>
<dbReference type="SMART" id="SM00739">
    <property type="entry name" value="KOW"/>
    <property type="match status" value="1"/>
</dbReference>
<dbReference type="SUPFAM" id="SSF50104">
    <property type="entry name" value="Translation proteins SH3-like domain"/>
    <property type="match status" value="1"/>
</dbReference>
<dbReference type="PROSITE" id="PS01108">
    <property type="entry name" value="RIBOSOMAL_L24"/>
    <property type="match status" value="1"/>
</dbReference>
<name>RL24_SALPK</name>
<keyword id="KW-0687">Ribonucleoprotein</keyword>
<keyword id="KW-0689">Ribosomal protein</keyword>
<keyword id="KW-0694">RNA-binding</keyword>
<keyword id="KW-0699">rRNA-binding</keyword>
<feature type="chain" id="PRO_1000142037" description="Large ribosomal subunit protein uL24">
    <location>
        <begin position="1"/>
        <end position="104"/>
    </location>
</feature>
<gene>
    <name evidence="1" type="primary">rplX</name>
    <name type="ordered locus">SSPA3074</name>
</gene>
<protein>
    <recommendedName>
        <fullName evidence="1">Large ribosomal subunit protein uL24</fullName>
    </recommendedName>
    <alternativeName>
        <fullName evidence="2">50S ribosomal protein L24</fullName>
    </alternativeName>
</protein>
<reference key="1">
    <citation type="journal article" date="2009" name="BMC Genomics">
        <title>Pseudogene accumulation in the evolutionary histories of Salmonella enterica serovars Paratyphi A and Typhi.</title>
        <authorList>
            <person name="Holt K.E."/>
            <person name="Thomson N.R."/>
            <person name="Wain J."/>
            <person name="Langridge G.C."/>
            <person name="Hasan R."/>
            <person name="Bhutta Z.A."/>
            <person name="Quail M.A."/>
            <person name="Norbertczak H."/>
            <person name="Walker D."/>
            <person name="Simmonds M."/>
            <person name="White B."/>
            <person name="Bason N."/>
            <person name="Mungall K."/>
            <person name="Dougan G."/>
            <person name="Parkhill J."/>
        </authorList>
    </citation>
    <scope>NUCLEOTIDE SEQUENCE [LARGE SCALE GENOMIC DNA]</scope>
    <source>
        <strain>AKU_12601</strain>
    </source>
</reference>
<evidence type="ECO:0000255" key="1">
    <source>
        <dbReference type="HAMAP-Rule" id="MF_01326"/>
    </source>
</evidence>
<evidence type="ECO:0000305" key="2"/>
<sequence length="104" mass="11346">MAAKIRRDDEVIVLTGKDKGKRGKVKNVLSSGKVIVEGINLVKKHQKPVPALNQPGGIVEKEAAIQVSNVAIFNTATGKADRVGFRFEDGKKVRFFKSNSETIK</sequence>
<comment type="function">
    <text evidence="1">One of two assembly initiator proteins, it binds directly to the 5'-end of the 23S rRNA, where it nucleates assembly of the 50S subunit.</text>
</comment>
<comment type="function">
    <text evidence="1">One of the proteins that surrounds the polypeptide exit tunnel on the outside of the subunit.</text>
</comment>
<comment type="subunit">
    <text evidence="1">Part of the 50S ribosomal subunit.</text>
</comment>
<comment type="similarity">
    <text evidence="1">Belongs to the universal ribosomal protein uL24 family.</text>
</comment>
<proteinExistence type="inferred from homology"/>